<protein>
    <recommendedName>
        <fullName>Probable rhamnogalacturonase E</fullName>
        <shortName>RGase E</shortName>
        <shortName>RHG E</shortName>
        <ecNumber>3.2.1.-</ecNumber>
    </recommendedName>
</protein>
<gene>
    <name type="primary">rhgE</name>
    <name type="ORF">An11g08700</name>
</gene>
<feature type="signal peptide" evidence="2">
    <location>
        <begin position="1"/>
        <end position="22"/>
    </location>
</feature>
<feature type="chain" id="PRO_5000220640" description="Probable rhamnogalacturonase E">
    <location>
        <begin position="23"/>
        <end position="448"/>
    </location>
</feature>
<feature type="active site" description="Proton donor" evidence="1">
    <location>
        <position position="221"/>
    </location>
</feature>
<feature type="active site" evidence="1">
    <location>
        <position position="296"/>
    </location>
</feature>
<feature type="glycosylation site" description="N-linked (GlcNAc...) asparagine" evidence="2">
    <location>
        <position position="54"/>
    </location>
</feature>
<feature type="glycosylation site" description="N-linked (GlcNAc...) asparagine" evidence="2">
    <location>
        <position position="92"/>
    </location>
</feature>
<feature type="glycosylation site" description="N-linked (GlcNAc...) asparagine" evidence="2">
    <location>
        <position position="131"/>
    </location>
</feature>
<feature type="glycosylation site" description="N-linked (GlcNAc...) asparagine" evidence="2">
    <location>
        <position position="256"/>
    </location>
</feature>
<feature type="glycosylation site" description="N-linked (GlcNAc...) asparagine" evidence="2">
    <location>
        <position position="284"/>
    </location>
</feature>
<feature type="glycosylation site" description="N-linked (GlcNAc...) asparagine" evidence="2">
    <location>
        <position position="323"/>
    </location>
</feature>
<feature type="glycosylation site" description="N-linked (GlcNAc...) asparagine" evidence="2">
    <location>
        <position position="328"/>
    </location>
</feature>
<feature type="disulfide bond" evidence="1">
    <location>
        <begin position="43"/>
        <end position="69"/>
    </location>
</feature>
<feature type="disulfide bond" evidence="1">
    <location>
        <begin position="223"/>
        <end position="240"/>
    </location>
</feature>
<feature type="disulfide bond" evidence="1">
    <location>
        <begin position="346"/>
        <end position="352"/>
    </location>
</feature>
<feature type="disulfide bond" evidence="1">
    <location>
        <begin position="374"/>
        <end position="382"/>
    </location>
</feature>
<feature type="sequence conflict" description="In Ref. 1; ABD67158." evidence="3" ref="1">
    <original>L</original>
    <variation>LV</variation>
    <location>
        <position position="215"/>
    </location>
</feature>
<feature type="sequence conflict" description="In Ref. 1; ABD67158." evidence="3" ref="1">
    <original>G</original>
    <variation>GS</variation>
    <location>
        <position position="379"/>
    </location>
</feature>
<keyword id="KW-0119">Carbohydrate metabolism</keyword>
<keyword id="KW-0961">Cell wall biogenesis/degradation</keyword>
<keyword id="KW-1015">Disulfide bond</keyword>
<keyword id="KW-0325">Glycoprotein</keyword>
<keyword id="KW-0326">Glycosidase</keyword>
<keyword id="KW-0378">Hydrolase</keyword>
<keyword id="KW-0624">Polysaccharide degradation</keyword>
<keyword id="KW-1185">Reference proteome</keyword>
<keyword id="KW-0964">Secreted</keyword>
<keyword id="KW-0732">Signal</keyword>
<name>RHGE_ASPNC</name>
<dbReference type="EC" id="3.2.1.-"/>
<dbReference type="EMBL" id="DQ417226">
    <property type="protein sequence ID" value="ABD67158.1"/>
    <property type="molecule type" value="Genomic_DNA"/>
</dbReference>
<dbReference type="EMBL" id="AM270245">
    <property type="protein sequence ID" value="CAK46056.1"/>
    <property type="status" value="ALT_SEQ"/>
    <property type="molecule type" value="Genomic_DNA"/>
</dbReference>
<dbReference type="SMR" id="A2QXE8"/>
<dbReference type="CAZy" id="GH28">
    <property type="family name" value="Glycoside Hydrolase Family 28"/>
</dbReference>
<dbReference type="GlyCosmos" id="A2QXE8">
    <property type="glycosylation" value="7 sites, No reported glycans"/>
</dbReference>
<dbReference type="Proteomes" id="UP000006706">
    <property type="component" value="Chromosome 7R"/>
</dbReference>
<dbReference type="GO" id="GO:0005576">
    <property type="term" value="C:extracellular region"/>
    <property type="evidence" value="ECO:0007669"/>
    <property type="project" value="UniProtKB-SubCell"/>
</dbReference>
<dbReference type="GO" id="GO:0004650">
    <property type="term" value="F:polygalacturonase activity"/>
    <property type="evidence" value="ECO:0007669"/>
    <property type="project" value="InterPro"/>
</dbReference>
<dbReference type="GO" id="GO:0046576">
    <property type="term" value="F:rhamnogalacturonan alpha-L-rhamnopyranosyl-(1-&gt;4)-alpha-D-galactopyranosyluronide lyase activity"/>
    <property type="evidence" value="ECO:0007669"/>
    <property type="project" value="UniProtKB-ARBA"/>
</dbReference>
<dbReference type="GO" id="GO:0071555">
    <property type="term" value="P:cell wall organization"/>
    <property type="evidence" value="ECO:0007669"/>
    <property type="project" value="UniProtKB-KW"/>
</dbReference>
<dbReference type="GO" id="GO:0000272">
    <property type="term" value="P:polysaccharide catabolic process"/>
    <property type="evidence" value="ECO:0007669"/>
    <property type="project" value="UniProtKB-KW"/>
</dbReference>
<dbReference type="Gene3D" id="2.160.20.10">
    <property type="entry name" value="Single-stranded right-handed beta-helix, Pectin lyase-like"/>
    <property type="match status" value="1"/>
</dbReference>
<dbReference type="InterPro" id="IPR000743">
    <property type="entry name" value="Glyco_hydro_28"/>
</dbReference>
<dbReference type="InterPro" id="IPR012334">
    <property type="entry name" value="Pectin_lyas_fold"/>
</dbReference>
<dbReference type="InterPro" id="IPR011050">
    <property type="entry name" value="Pectin_lyase_fold/virulence"/>
</dbReference>
<dbReference type="PANTHER" id="PTHR31736">
    <property type="match status" value="1"/>
</dbReference>
<dbReference type="PANTHER" id="PTHR31736:SF19">
    <property type="entry name" value="PECTIN LYASE SUPERFAMILY PROTEIN-RELATED"/>
    <property type="match status" value="1"/>
</dbReference>
<dbReference type="Pfam" id="PF00295">
    <property type="entry name" value="Glyco_hydro_28"/>
    <property type="match status" value="1"/>
</dbReference>
<dbReference type="SUPFAM" id="SSF51126">
    <property type="entry name" value="Pectin lyase-like"/>
    <property type="match status" value="1"/>
</dbReference>
<evidence type="ECO:0000250" key="1"/>
<evidence type="ECO:0000255" key="2"/>
<evidence type="ECO:0000305" key="3"/>
<sequence>MTWSTSFLVATSLLSIINSVHAQLTGSVGPLTSVIDKAAVKTCNVCDYGASSDNTTGVGQPIIDAFTDCGSGGLIHVPEGDYLLKDWVSSENGSAWSIQLDGVLHWDSSPSAQSYIFAITGGSDSELSSSNATGAIQGSGYLYHRHNTYTSPRMLYISGVSDWTVHDLVLVNSPMPHFVIDGGYNGEAYNMAICGGDHGGLDGIDLYGGNIWIHLMVTNKDECVTSKTNSHNFLIENIYCNPSGGCAIGSLGSSVNVTNILYRNVYTWDSNQMMMIKTNGGLGNVSNIVFENFIGHGNVNSLDLDSYWSSMNAIDGVGIYYHNITIYNWTGTAIDGETRPPIRVICPEDMPCTEITLVQIDLLVEEGRYDEYYCAIACGGYCLDSATSTLTTYTTTTYGNSASTGYEAPTMADDLATAFGTTASIPTPTTPASFFPGVAPVSAVAGSS</sequence>
<comment type="function">
    <text evidence="1">Pectinolytic enzymes consist of four classes of enzymes: pectine lyase, polygalacturonase, pectin methylesterase and rhamnogalacturonase. Hydrolyzes alpha-D-galacturonopyranosyl-(1,2)-alpha-L-rhamnopyranosyl linkages in the backbone of the hairy regions of pectins (By similarity).</text>
</comment>
<comment type="subcellular location">
    <subcellularLocation>
        <location evidence="1">Secreted</location>
    </subcellularLocation>
</comment>
<comment type="similarity">
    <text evidence="3">Belongs to the glycosyl hydrolase 28 family.</text>
</comment>
<comment type="sequence caution" evidence="3">
    <conflict type="erroneous gene model prediction">
        <sequence resource="EMBL-CDS" id="CAK46056"/>
    </conflict>
</comment>
<comment type="sequence caution" evidence="3">
    <conflict type="frameshift">
        <sequence resource="EMBL-CDS" id="CAK46056"/>
    </conflict>
</comment>
<accession>A2QXE8</accession>
<accession>Q1ZZM1</accession>
<proteinExistence type="inferred from homology"/>
<reference key="1">
    <citation type="journal article" date="2006" name="Biochem. J.">
        <title>A new group of exo-acting family 28 glycoside hydrolases of Aspergillus niger that are involved in pectin degradation.</title>
        <authorList>
            <person name="Martens-Uzunova E.S."/>
            <person name="Zandleven J.S."/>
            <person name="Benen J.A."/>
            <person name="Awad H."/>
            <person name="Kools H.J."/>
            <person name="Beldman G."/>
            <person name="Voragen A.G."/>
            <person name="Van den Berg J.A."/>
            <person name="Schaap P.J."/>
        </authorList>
    </citation>
    <scope>NUCLEOTIDE SEQUENCE [GENOMIC DNA]</scope>
</reference>
<reference key="2">
    <citation type="journal article" date="2007" name="Nat. Biotechnol.">
        <title>Genome sequencing and analysis of the versatile cell factory Aspergillus niger CBS 513.88.</title>
        <authorList>
            <person name="Pel H.J."/>
            <person name="de Winde J.H."/>
            <person name="Archer D.B."/>
            <person name="Dyer P.S."/>
            <person name="Hofmann G."/>
            <person name="Schaap P.J."/>
            <person name="Turner G."/>
            <person name="de Vries R.P."/>
            <person name="Albang R."/>
            <person name="Albermann K."/>
            <person name="Andersen M.R."/>
            <person name="Bendtsen J.D."/>
            <person name="Benen J.A.E."/>
            <person name="van den Berg M."/>
            <person name="Breestraat S."/>
            <person name="Caddick M.X."/>
            <person name="Contreras R."/>
            <person name="Cornell M."/>
            <person name="Coutinho P.M."/>
            <person name="Danchin E.G.J."/>
            <person name="Debets A.J.M."/>
            <person name="Dekker P."/>
            <person name="van Dijck P.W.M."/>
            <person name="van Dijk A."/>
            <person name="Dijkhuizen L."/>
            <person name="Driessen A.J.M."/>
            <person name="d'Enfert C."/>
            <person name="Geysens S."/>
            <person name="Goosen C."/>
            <person name="Groot G.S.P."/>
            <person name="de Groot P.W.J."/>
            <person name="Guillemette T."/>
            <person name="Henrissat B."/>
            <person name="Herweijer M."/>
            <person name="van den Hombergh J.P.T.W."/>
            <person name="van den Hondel C.A.M.J.J."/>
            <person name="van der Heijden R.T.J.M."/>
            <person name="van der Kaaij R.M."/>
            <person name="Klis F.M."/>
            <person name="Kools H.J."/>
            <person name="Kubicek C.P."/>
            <person name="van Kuyk P.A."/>
            <person name="Lauber J."/>
            <person name="Lu X."/>
            <person name="van der Maarel M.J.E.C."/>
            <person name="Meulenberg R."/>
            <person name="Menke H."/>
            <person name="Mortimer M.A."/>
            <person name="Nielsen J."/>
            <person name="Oliver S.G."/>
            <person name="Olsthoorn M."/>
            <person name="Pal K."/>
            <person name="van Peij N.N.M.E."/>
            <person name="Ram A.F.J."/>
            <person name="Rinas U."/>
            <person name="Roubos J.A."/>
            <person name="Sagt C.M.J."/>
            <person name="Schmoll M."/>
            <person name="Sun J."/>
            <person name="Ussery D."/>
            <person name="Varga J."/>
            <person name="Vervecken W."/>
            <person name="van de Vondervoort P.J.J."/>
            <person name="Wedler H."/>
            <person name="Woesten H.A.B."/>
            <person name="Zeng A.-P."/>
            <person name="van Ooyen A.J.J."/>
            <person name="Visser J."/>
            <person name="Stam H."/>
        </authorList>
    </citation>
    <scope>NUCLEOTIDE SEQUENCE [LARGE SCALE GENOMIC DNA]</scope>
    <source>
        <strain>ATCC MYA-4892 / CBS 513.88 / FGSC A1513</strain>
    </source>
</reference>
<organism>
    <name type="scientific">Aspergillus niger (strain ATCC MYA-4892 / CBS 513.88 / FGSC A1513)</name>
    <dbReference type="NCBI Taxonomy" id="425011"/>
    <lineage>
        <taxon>Eukaryota</taxon>
        <taxon>Fungi</taxon>
        <taxon>Dikarya</taxon>
        <taxon>Ascomycota</taxon>
        <taxon>Pezizomycotina</taxon>
        <taxon>Eurotiomycetes</taxon>
        <taxon>Eurotiomycetidae</taxon>
        <taxon>Eurotiales</taxon>
        <taxon>Aspergillaceae</taxon>
        <taxon>Aspergillus</taxon>
        <taxon>Aspergillus subgen. Circumdati</taxon>
    </lineage>
</organism>